<organism>
    <name type="scientific">Homo sapiens</name>
    <name type="common">Human</name>
    <dbReference type="NCBI Taxonomy" id="9606"/>
    <lineage>
        <taxon>Eukaryota</taxon>
        <taxon>Metazoa</taxon>
        <taxon>Chordata</taxon>
        <taxon>Craniata</taxon>
        <taxon>Vertebrata</taxon>
        <taxon>Euteleostomi</taxon>
        <taxon>Mammalia</taxon>
        <taxon>Eutheria</taxon>
        <taxon>Euarchontoglires</taxon>
        <taxon>Primates</taxon>
        <taxon>Haplorrhini</taxon>
        <taxon>Catarrhini</taxon>
        <taxon>Hominidae</taxon>
        <taxon>Homo</taxon>
    </lineage>
</organism>
<accession>Q86XT9</accession>
<accession>D5FK14</accession>
<accession>Q8WVV8</accession>
<feature type="signal peptide" evidence="1">
    <location>
        <begin position="1"/>
        <end position="38"/>
    </location>
</feature>
<feature type="chain" id="PRO_0000329049" description="Insulin-like growth factor-binding protein 3 receptor">
    <location>
        <begin position="39"/>
        <end position="240"/>
    </location>
</feature>
<feature type="topological domain" description="Extracellular" evidence="1">
    <location>
        <begin position="39"/>
        <end position="204"/>
    </location>
</feature>
<feature type="transmembrane region" description="Helical" evidence="1">
    <location>
        <begin position="205"/>
        <end position="225"/>
    </location>
</feature>
<feature type="topological domain" description="Cytoplasmic" evidence="1">
    <location>
        <begin position="226"/>
        <end position="240"/>
    </location>
</feature>
<feature type="glycosylation site" description="N-linked (GlcNAc...) asparagine" evidence="1">
    <location>
        <position position="73"/>
    </location>
</feature>
<feature type="glycosylation site" description="N-linked (GlcNAc...) asparagine" evidence="1">
    <location>
        <position position="101"/>
    </location>
</feature>
<feature type="glycosylation site" description="N-linked (GlcNAc...) asparagine" evidence="1">
    <location>
        <position position="167"/>
    </location>
</feature>
<dbReference type="EMBL" id="FJ748884">
    <property type="protein sequence ID" value="ACQ72822.1"/>
    <property type="molecule type" value="mRNA"/>
</dbReference>
<dbReference type="EMBL" id="CH471238">
    <property type="protein sequence ID" value="EAW79966.1"/>
    <property type="molecule type" value="Genomic_DNA"/>
</dbReference>
<dbReference type="EMBL" id="BC017488">
    <property type="protein sequence ID" value="AAH17488.1"/>
    <property type="molecule type" value="mRNA"/>
</dbReference>
<dbReference type="EMBL" id="BC050051">
    <property type="protein sequence ID" value="AAH50051.1"/>
    <property type="molecule type" value="mRNA"/>
</dbReference>
<dbReference type="CCDS" id="CCDS42145.1"/>
<dbReference type="RefSeq" id="NP_001077082.1">
    <property type="nucleotide sequence ID" value="NM_001083613.2"/>
</dbReference>
<dbReference type="RefSeq" id="NP_001356617.1">
    <property type="nucleotide sequence ID" value="NM_001369688.1"/>
</dbReference>
<dbReference type="RefSeq" id="NP_919256.1">
    <property type="nucleotide sequence ID" value="NM_194280.4"/>
</dbReference>
<dbReference type="RefSeq" id="XP_005255180.1">
    <property type="nucleotide sequence ID" value="XM_005255123.2"/>
</dbReference>
<dbReference type="RefSeq" id="XP_047289578.1">
    <property type="nucleotide sequence ID" value="XM_047433622.1"/>
</dbReference>
<dbReference type="RefSeq" id="XP_054235585.1">
    <property type="nucleotide sequence ID" value="XM_054379610.1"/>
</dbReference>
<dbReference type="RefSeq" id="XP_054235586.1">
    <property type="nucleotide sequence ID" value="XM_054379611.1"/>
</dbReference>
<dbReference type="SMR" id="Q86XT9"/>
<dbReference type="BioGRID" id="125865">
    <property type="interactions" value="23"/>
</dbReference>
<dbReference type="ComplexPortal" id="CPX-847">
    <property type="entry name" value="TMEM219-Interleukin-13 decoy-receptor-ligand alpha 2 complex"/>
</dbReference>
<dbReference type="ComplexPortal" id="CPX-9184">
    <property type="entry name" value="Chitinase 3-like-1-tmem219-interleukin-13 receptor-ligand alpha-2 signalling complex"/>
</dbReference>
<dbReference type="CORUM" id="Q86XT9"/>
<dbReference type="FunCoup" id="Q86XT9">
    <property type="interactions" value="341"/>
</dbReference>
<dbReference type="IntAct" id="Q86XT9">
    <property type="interactions" value="29"/>
</dbReference>
<dbReference type="STRING" id="9606.ENSP00000457492"/>
<dbReference type="GlyCosmos" id="Q86XT9">
    <property type="glycosylation" value="3 sites, No reported glycans"/>
</dbReference>
<dbReference type="GlyGen" id="Q86XT9">
    <property type="glycosylation" value="3 sites, 1 N-linked glycan (1 site)"/>
</dbReference>
<dbReference type="iPTMnet" id="Q86XT9"/>
<dbReference type="PhosphoSitePlus" id="Q86XT9"/>
<dbReference type="SwissPalm" id="Q86XT9"/>
<dbReference type="BioMuta" id="TMEM219"/>
<dbReference type="jPOST" id="Q86XT9"/>
<dbReference type="MassIVE" id="Q86XT9"/>
<dbReference type="PaxDb" id="9606-ENSP00000457492"/>
<dbReference type="PeptideAtlas" id="Q86XT9"/>
<dbReference type="ProteomicsDB" id="70333"/>
<dbReference type="Antibodypedia" id="68649">
    <property type="antibodies" value="10 antibodies from 7 providers"/>
</dbReference>
<dbReference type="DNASU" id="124446"/>
<dbReference type="Ensembl" id="ENST00000279396.11">
    <property type="protein sequence ID" value="ENSP00000279396.6"/>
    <property type="gene ID" value="ENSG00000149932.17"/>
</dbReference>
<dbReference type="Ensembl" id="ENST00000414689.6">
    <property type="protein sequence ID" value="ENSP00000388485.2"/>
    <property type="gene ID" value="ENSG00000149932.17"/>
</dbReference>
<dbReference type="Ensembl" id="ENST00000561899.6">
    <property type="protein sequence ID" value="ENSP00000456960.1"/>
    <property type="gene ID" value="ENSG00000149932.17"/>
</dbReference>
<dbReference type="Ensembl" id="ENST00000566848.5">
    <property type="protein sequence ID" value="ENSP00000457492.1"/>
    <property type="gene ID" value="ENSG00000149932.17"/>
</dbReference>
<dbReference type="Ensembl" id="ENST00000570255.6">
    <property type="protein sequence ID" value="ENSP00000459813.2"/>
    <property type="gene ID" value="ENSG00000149932.17"/>
</dbReference>
<dbReference type="GeneID" id="124446"/>
<dbReference type="KEGG" id="hsa:124446"/>
<dbReference type="MANE-Select" id="ENST00000279396.11">
    <property type="protein sequence ID" value="ENSP00000279396.6"/>
    <property type="RefSeq nucleotide sequence ID" value="NM_001083613.2"/>
    <property type="RefSeq protein sequence ID" value="NP_001077082.1"/>
</dbReference>
<dbReference type="UCSC" id="uc002duw.3">
    <property type="organism name" value="human"/>
</dbReference>
<dbReference type="AGR" id="HGNC:25201"/>
<dbReference type="CTD" id="124446"/>
<dbReference type="DisGeNET" id="124446"/>
<dbReference type="GeneCards" id="TMEM219"/>
<dbReference type="HGNC" id="HGNC:25201">
    <property type="gene designation" value="TMEM219"/>
</dbReference>
<dbReference type="HPA" id="ENSG00000149932">
    <property type="expression patterns" value="Low tissue specificity"/>
</dbReference>
<dbReference type="MIM" id="620290">
    <property type="type" value="gene"/>
</dbReference>
<dbReference type="neXtProt" id="NX_Q86XT9"/>
<dbReference type="OpenTargets" id="ENSG00000149932"/>
<dbReference type="PharmGKB" id="PA162406570"/>
<dbReference type="VEuPathDB" id="HostDB:ENSG00000149932"/>
<dbReference type="eggNOG" id="ENOG502S30C">
    <property type="taxonomic scope" value="Eukaryota"/>
</dbReference>
<dbReference type="GeneTree" id="ENSGT00940000153883"/>
<dbReference type="HOGENOM" id="CLU_101408_0_0_1"/>
<dbReference type="InParanoid" id="Q86XT9"/>
<dbReference type="OMA" id="TCYSLNF"/>
<dbReference type="OrthoDB" id="8680674at2759"/>
<dbReference type="PAN-GO" id="Q86XT9">
    <property type="GO annotations" value="0 GO annotations based on evolutionary models"/>
</dbReference>
<dbReference type="PhylomeDB" id="Q86XT9"/>
<dbReference type="TreeFam" id="TF338507"/>
<dbReference type="PathwayCommons" id="Q86XT9"/>
<dbReference type="Reactome" id="R-HSA-6803211">
    <property type="pathway name" value="TP53 Regulates Transcription of Death Receptors and Ligands"/>
</dbReference>
<dbReference type="SignaLink" id="Q86XT9"/>
<dbReference type="BioGRID-ORCS" id="124446">
    <property type="hits" value="16 hits in 1160 CRISPR screens"/>
</dbReference>
<dbReference type="ChiTaRS" id="TMEM219">
    <property type="organism name" value="human"/>
</dbReference>
<dbReference type="GenomeRNAi" id="124446"/>
<dbReference type="Pharos" id="Q86XT9">
    <property type="development level" value="Tdark"/>
</dbReference>
<dbReference type="PRO" id="PR:Q86XT9"/>
<dbReference type="Proteomes" id="UP000005640">
    <property type="component" value="Chromosome 16"/>
</dbReference>
<dbReference type="RNAct" id="Q86XT9">
    <property type="molecule type" value="protein"/>
</dbReference>
<dbReference type="Bgee" id="ENSG00000149932">
    <property type="expression patterns" value="Expressed in right testis and 178 other cell types or tissues"/>
</dbReference>
<dbReference type="ExpressionAtlas" id="Q86XT9">
    <property type="expression patterns" value="baseline and differential"/>
</dbReference>
<dbReference type="GO" id="GO:0005886">
    <property type="term" value="C:plasma membrane"/>
    <property type="evidence" value="ECO:0000304"/>
    <property type="project" value="Reactome"/>
</dbReference>
<dbReference type="GO" id="GO:0006915">
    <property type="term" value="P:apoptotic process"/>
    <property type="evidence" value="ECO:0007669"/>
    <property type="project" value="UniProtKB-KW"/>
</dbReference>
<dbReference type="InterPro" id="IPR039493">
    <property type="entry name" value="TMEM248/TMEM219"/>
</dbReference>
<dbReference type="InterPro" id="IPR039587">
    <property type="entry name" value="TMEM248/TMEM219_dom"/>
</dbReference>
<dbReference type="PANTHER" id="PTHR16002:SF6">
    <property type="entry name" value="INSULIN-LIKE GROWTH FACTOR-BINDING PROTEIN 3 RECEPTOR"/>
    <property type="match status" value="1"/>
</dbReference>
<dbReference type="PANTHER" id="PTHR16002">
    <property type="entry name" value="TRANSMEMBRANE PROTEIN 248-LIKE"/>
    <property type="match status" value="1"/>
</dbReference>
<dbReference type="Pfam" id="PF14940">
    <property type="entry name" value="TMEM219"/>
    <property type="match status" value="1"/>
</dbReference>
<gene>
    <name type="primary">TMEM219</name>
</gene>
<protein>
    <recommendedName>
        <fullName>Insulin-like growth factor-binding protein 3 receptor</fullName>
        <shortName>IGFBP-3R</shortName>
    </recommendedName>
    <alternativeName>
        <fullName>Transmembrane protein 219</fullName>
    </alternativeName>
</protein>
<comment type="function">
    <text evidence="2">Cell death receptor specific for IGFBP3, may mediate caspase-8-dependent apoptosis upon ligand binding.</text>
</comment>
<comment type="subunit">
    <text evidence="2">Interacts with IGFBP3. Interacts with CASP8.</text>
</comment>
<comment type="interaction">
    <interactant intactId="EBI-20264080">
        <id>Q86XT9</id>
    </interactant>
    <interactant intactId="EBI-715709">
        <id>P17936</id>
        <label>IGFBP3</label>
    </interactant>
    <organismsDiffer>false</organismsDiffer>
    <experiments>8</experiments>
</comment>
<comment type="interaction">
    <interactant intactId="EBI-20264080">
        <id>Q86XT9</id>
    </interactant>
    <interactant intactId="EBI-4320063">
        <id>Q14627</id>
        <label>IL13RA2</label>
    </interactant>
    <organismsDiffer>false</organismsDiffer>
    <experiments>9</experiments>
</comment>
<comment type="subcellular location">
    <subcellularLocation>
        <location evidence="2">Cell membrane</location>
        <topology evidence="2">Single-pass membrane protein</topology>
    </subcellularLocation>
</comment>
<comment type="tissue specificity">
    <text evidence="2">Widely expressed in normal tissues but suppressed in prostate and breast tumor.</text>
</comment>
<name>TM219_HUMAN</name>
<keyword id="KW-0053">Apoptosis</keyword>
<keyword id="KW-1003">Cell membrane</keyword>
<keyword id="KW-0325">Glycoprotein</keyword>
<keyword id="KW-0472">Membrane</keyword>
<keyword id="KW-1267">Proteomics identification</keyword>
<keyword id="KW-0675">Receptor</keyword>
<keyword id="KW-1185">Reference proteome</keyword>
<keyword id="KW-0732">Signal</keyword>
<keyword id="KW-0812">Transmembrane</keyword>
<keyword id="KW-1133">Transmembrane helix</keyword>
<reference key="1">
    <citation type="journal article" date="2010" name="J. Biol. Chem.">
        <title>Identification of a novel cell death receptor mediating IGFBP-3-induced anti-tumor effects in breast and prostate cancer.</title>
        <authorList>
            <person name="Ingermann A.R."/>
            <person name="Yang Y.F."/>
            <person name="Han J."/>
            <person name="Mikami A."/>
            <person name="Garza A.E."/>
            <person name="Mohanraj L."/>
            <person name="Fan L."/>
            <person name="Idowu M."/>
            <person name="Ware J.L."/>
            <person name="Kim H.S."/>
            <person name="Lee D.Y."/>
            <person name="Oh Y."/>
        </authorList>
    </citation>
    <scope>NUCLEOTIDE SEQUENCE [MRNA]</scope>
    <scope>FUNCTION</scope>
    <scope>SUBCELLULAR LOCATION</scope>
    <scope>INTERACTION WITH IGFBP3 AND CASP8</scope>
    <scope>TISSUE SPECIFICITY</scope>
</reference>
<reference key="2">
    <citation type="submission" date="2005-07" db="EMBL/GenBank/DDBJ databases">
        <authorList>
            <person name="Mural R.J."/>
            <person name="Istrail S."/>
            <person name="Sutton G.G."/>
            <person name="Florea L."/>
            <person name="Halpern A.L."/>
            <person name="Mobarry C.M."/>
            <person name="Lippert R."/>
            <person name="Walenz B."/>
            <person name="Shatkay H."/>
            <person name="Dew I."/>
            <person name="Miller J.R."/>
            <person name="Flanigan M.J."/>
            <person name="Edwards N.J."/>
            <person name="Bolanos R."/>
            <person name="Fasulo D."/>
            <person name="Halldorsson B.V."/>
            <person name="Hannenhalli S."/>
            <person name="Turner R."/>
            <person name="Yooseph S."/>
            <person name="Lu F."/>
            <person name="Nusskern D.R."/>
            <person name="Shue B.C."/>
            <person name="Zheng X.H."/>
            <person name="Zhong F."/>
            <person name="Delcher A.L."/>
            <person name="Huson D.H."/>
            <person name="Kravitz S.A."/>
            <person name="Mouchard L."/>
            <person name="Reinert K."/>
            <person name="Remington K.A."/>
            <person name="Clark A.G."/>
            <person name="Waterman M.S."/>
            <person name="Eichler E.E."/>
            <person name="Adams M.D."/>
            <person name="Hunkapiller M.W."/>
            <person name="Myers E.W."/>
            <person name="Venter J.C."/>
        </authorList>
    </citation>
    <scope>NUCLEOTIDE SEQUENCE [LARGE SCALE GENOMIC DNA]</scope>
</reference>
<reference key="3">
    <citation type="journal article" date="2004" name="Genome Res.">
        <title>The status, quality, and expansion of the NIH full-length cDNA project: the Mammalian Gene Collection (MGC).</title>
        <authorList>
            <consortium name="The MGC Project Team"/>
        </authorList>
    </citation>
    <scope>NUCLEOTIDE SEQUENCE [LARGE SCALE MRNA]</scope>
    <source>
        <tissue>Brain</tissue>
        <tissue>Lung</tissue>
    </source>
</reference>
<sequence length="240" mass="25724">MGNCQAGHNLHLCLAHHPPLVCATLILLLLGLSGLGLGSFLLTHRTGLRSPDIPQDWVSFLRSFGQLTLCPRNGTVTGKWRGSHVVGLLTTLNFGDGPDRNKTRTFQATVLGSQMGLKGSSAGQLVLITARVTTERTAGTCLYFSAVPGILPSSQPPISCSEEGAGNATLSPRMGEECVSVWSHEGLVLTKLLTSEELALCGSRLLVLGSFLLLFCGLLCCVTAMCFHPRRESHWSRTRL</sequence>
<proteinExistence type="evidence at protein level"/>
<evidence type="ECO:0000255" key="1"/>
<evidence type="ECO:0000269" key="2">
    <source>
    </source>
</evidence>